<keyword id="KW-0414">Isoprene biosynthesis</keyword>
<keyword id="KW-0460">Magnesium</keyword>
<keyword id="KW-0479">Metal-binding</keyword>
<keyword id="KW-1185">Reference proteome</keyword>
<keyword id="KW-0784">Thiamine biosynthesis</keyword>
<keyword id="KW-0786">Thiamine pyrophosphate</keyword>
<keyword id="KW-0808">Transferase</keyword>
<name>DXS_PECAS</name>
<accession>Q6D844</accession>
<sequence>MSFDTAKYPTLALVETPDELRLLPKESLPKLCDELRQYLLDSVSRSSGHFASGLGTVELTVALHYVYNTPFDHLVWDVGHQAYPHKILTGRRDRISTIRQKGGLHPFPWRDESEYDVLSVGHSSTSISAGLGMAVAAEREGKGRRTVCVIGDGAITAGMAFEAMNHAGDIKSDLLVVLNDNEMSISENVGALNNHLAQLLSGKLYASLREGGKKVLSGLPPIKELVKRTEEHLKGMVVPGTLFEELGFNYIGPVDGHDVQALSHTLKNMRSLKGPQLLHIMTKKGKGYAPAEQDPISWHAVPKFDPASGTLPKSKEGAQPTYSKIFGQWLQETAAKDSKLMAITPAMREGSGMLQFSRDYPQQYFDVAIAEQHAVTFAAGLAVGGYHPIVAIYSTFLQRAYDQVIHDVAIQSLPVLFAIDRGGIVGADGQTHQGAFDLSFLRCIPNMIIMTPSDENECRQMLHTGYHYQKGPTAVRYPRGNGTGTELTPLSELPIGKGVVRRQGKTVAILNFGTLLPEAQAVAEKLNATLVDMRFVKPLDEALLEELAQSHSTFVTLEENAVMGGAGSGVNEFLMAKRLAVSVLNIGLPDVFIPQGSQEEIRVDLGLDAAGIERRITQWME</sequence>
<comment type="function">
    <text evidence="1">Catalyzes the acyloin condensation reaction between C atoms 2 and 3 of pyruvate and glyceraldehyde 3-phosphate to yield 1-deoxy-D-xylulose-5-phosphate (DXP).</text>
</comment>
<comment type="catalytic activity">
    <reaction evidence="1">
        <text>D-glyceraldehyde 3-phosphate + pyruvate + H(+) = 1-deoxy-D-xylulose 5-phosphate + CO2</text>
        <dbReference type="Rhea" id="RHEA:12605"/>
        <dbReference type="ChEBI" id="CHEBI:15361"/>
        <dbReference type="ChEBI" id="CHEBI:15378"/>
        <dbReference type="ChEBI" id="CHEBI:16526"/>
        <dbReference type="ChEBI" id="CHEBI:57792"/>
        <dbReference type="ChEBI" id="CHEBI:59776"/>
        <dbReference type="EC" id="2.2.1.7"/>
    </reaction>
</comment>
<comment type="cofactor">
    <cofactor evidence="1">
        <name>Mg(2+)</name>
        <dbReference type="ChEBI" id="CHEBI:18420"/>
    </cofactor>
    <text evidence="1">Binds 1 Mg(2+) ion per subunit.</text>
</comment>
<comment type="cofactor">
    <cofactor evidence="1">
        <name>thiamine diphosphate</name>
        <dbReference type="ChEBI" id="CHEBI:58937"/>
    </cofactor>
    <text evidence="1">Binds 1 thiamine pyrophosphate per subunit.</text>
</comment>
<comment type="pathway">
    <text evidence="1">Metabolic intermediate biosynthesis; 1-deoxy-D-xylulose 5-phosphate biosynthesis; 1-deoxy-D-xylulose 5-phosphate from D-glyceraldehyde 3-phosphate and pyruvate: step 1/1.</text>
</comment>
<comment type="subunit">
    <text evidence="1">Homodimer.</text>
</comment>
<comment type="similarity">
    <text evidence="1">Belongs to the transketolase family. DXPS subfamily.</text>
</comment>
<dbReference type="EC" id="2.2.1.7" evidence="1"/>
<dbReference type="EMBL" id="BX950851">
    <property type="protein sequence ID" value="CAG74041.1"/>
    <property type="molecule type" value="Genomic_DNA"/>
</dbReference>
<dbReference type="RefSeq" id="WP_011092725.1">
    <property type="nucleotide sequence ID" value="NC_004547.2"/>
</dbReference>
<dbReference type="SMR" id="Q6D844"/>
<dbReference type="STRING" id="218491.ECA1131"/>
<dbReference type="GeneID" id="57207945"/>
<dbReference type="KEGG" id="eca:ECA1131"/>
<dbReference type="PATRIC" id="fig|218491.5.peg.1144"/>
<dbReference type="eggNOG" id="COG1154">
    <property type="taxonomic scope" value="Bacteria"/>
</dbReference>
<dbReference type="HOGENOM" id="CLU_009227_1_4_6"/>
<dbReference type="OrthoDB" id="9803371at2"/>
<dbReference type="UniPathway" id="UPA00064">
    <property type="reaction ID" value="UER00091"/>
</dbReference>
<dbReference type="Proteomes" id="UP000007966">
    <property type="component" value="Chromosome"/>
</dbReference>
<dbReference type="GO" id="GO:0005829">
    <property type="term" value="C:cytosol"/>
    <property type="evidence" value="ECO:0007669"/>
    <property type="project" value="TreeGrafter"/>
</dbReference>
<dbReference type="GO" id="GO:0008661">
    <property type="term" value="F:1-deoxy-D-xylulose-5-phosphate synthase activity"/>
    <property type="evidence" value="ECO:0007669"/>
    <property type="project" value="UniProtKB-UniRule"/>
</dbReference>
<dbReference type="GO" id="GO:0000287">
    <property type="term" value="F:magnesium ion binding"/>
    <property type="evidence" value="ECO:0007669"/>
    <property type="project" value="UniProtKB-UniRule"/>
</dbReference>
<dbReference type="GO" id="GO:0030976">
    <property type="term" value="F:thiamine pyrophosphate binding"/>
    <property type="evidence" value="ECO:0007669"/>
    <property type="project" value="UniProtKB-UniRule"/>
</dbReference>
<dbReference type="GO" id="GO:0052865">
    <property type="term" value="P:1-deoxy-D-xylulose 5-phosphate biosynthetic process"/>
    <property type="evidence" value="ECO:0007669"/>
    <property type="project" value="UniProtKB-UniPathway"/>
</dbReference>
<dbReference type="GO" id="GO:0019288">
    <property type="term" value="P:isopentenyl diphosphate biosynthetic process, methylerythritol 4-phosphate pathway"/>
    <property type="evidence" value="ECO:0007669"/>
    <property type="project" value="TreeGrafter"/>
</dbReference>
<dbReference type="GO" id="GO:0016114">
    <property type="term" value="P:terpenoid biosynthetic process"/>
    <property type="evidence" value="ECO:0007669"/>
    <property type="project" value="UniProtKB-UniRule"/>
</dbReference>
<dbReference type="GO" id="GO:0009228">
    <property type="term" value="P:thiamine biosynthetic process"/>
    <property type="evidence" value="ECO:0007669"/>
    <property type="project" value="UniProtKB-UniRule"/>
</dbReference>
<dbReference type="CDD" id="cd02007">
    <property type="entry name" value="TPP_DXS"/>
    <property type="match status" value="1"/>
</dbReference>
<dbReference type="CDD" id="cd07033">
    <property type="entry name" value="TPP_PYR_DXS_TK_like"/>
    <property type="match status" value="1"/>
</dbReference>
<dbReference type="FunFam" id="3.40.50.920:FF:000002">
    <property type="entry name" value="1-deoxy-D-xylulose-5-phosphate synthase"/>
    <property type="match status" value="1"/>
</dbReference>
<dbReference type="FunFam" id="3.40.50.970:FF:000005">
    <property type="entry name" value="1-deoxy-D-xylulose-5-phosphate synthase"/>
    <property type="match status" value="1"/>
</dbReference>
<dbReference type="Gene3D" id="3.40.50.920">
    <property type="match status" value="1"/>
</dbReference>
<dbReference type="Gene3D" id="3.40.50.970">
    <property type="match status" value="2"/>
</dbReference>
<dbReference type="HAMAP" id="MF_00315">
    <property type="entry name" value="DXP_synth"/>
    <property type="match status" value="1"/>
</dbReference>
<dbReference type="InterPro" id="IPR005477">
    <property type="entry name" value="Dxylulose-5-P_synthase"/>
</dbReference>
<dbReference type="InterPro" id="IPR029061">
    <property type="entry name" value="THDP-binding"/>
</dbReference>
<dbReference type="InterPro" id="IPR009014">
    <property type="entry name" value="Transketo_C/PFOR_II"/>
</dbReference>
<dbReference type="InterPro" id="IPR005475">
    <property type="entry name" value="Transketolase-like_Pyr-bd"/>
</dbReference>
<dbReference type="InterPro" id="IPR020826">
    <property type="entry name" value="Transketolase_BS"/>
</dbReference>
<dbReference type="InterPro" id="IPR033248">
    <property type="entry name" value="Transketolase_C"/>
</dbReference>
<dbReference type="InterPro" id="IPR049557">
    <property type="entry name" value="Transketolase_CS"/>
</dbReference>
<dbReference type="NCBIfam" id="TIGR00204">
    <property type="entry name" value="dxs"/>
    <property type="match status" value="1"/>
</dbReference>
<dbReference type="NCBIfam" id="NF003933">
    <property type="entry name" value="PRK05444.2-2"/>
    <property type="match status" value="1"/>
</dbReference>
<dbReference type="PANTHER" id="PTHR43322">
    <property type="entry name" value="1-D-DEOXYXYLULOSE 5-PHOSPHATE SYNTHASE-RELATED"/>
    <property type="match status" value="1"/>
</dbReference>
<dbReference type="PANTHER" id="PTHR43322:SF5">
    <property type="entry name" value="1-DEOXY-D-XYLULOSE-5-PHOSPHATE SYNTHASE, CHLOROPLASTIC"/>
    <property type="match status" value="1"/>
</dbReference>
<dbReference type="Pfam" id="PF13292">
    <property type="entry name" value="DXP_synthase_N"/>
    <property type="match status" value="1"/>
</dbReference>
<dbReference type="Pfam" id="PF02779">
    <property type="entry name" value="Transket_pyr"/>
    <property type="match status" value="1"/>
</dbReference>
<dbReference type="Pfam" id="PF02780">
    <property type="entry name" value="Transketolase_C"/>
    <property type="match status" value="1"/>
</dbReference>
<dbReference type="SMART" id="SM00861">
    <property type="entry name" value="Transket_pyr"/>
    <property type="match status" value="1"/>
</dbReference>
<dbReference type="SUPFAM" id="SSF52518">
    <property type="entry name" value="Thiamin diphosphate-binding fold (THDP-binding)"/>
    <property type="match status" value="2"/>
</dbReference>
<dbReference type="SUPFAM" id="SSF52922">
    <property type="entry name" value="TK C-terminal domain-like"/>
    <property type="match status" value="1"/>
</dbReference>
<dbReference type="PROSITE" id="PS00801">
    <property type="entry name" value="TRANSKETOLASE_1"/>
    <property type="match status" value="1"/>
</dbReference>
<dbReference type="PROSITE" id="PS00802">
    <property type="entry name" value="TRANSKETOLASE_2"/>
    <property type="match status" value="1"/>
</dbReference>
<evidence type="ECO:0000255" key="1">
    <source>
        <dbReference type="HAMAP-Rule" id="MF_00315"/>
    </source>
</evidence>
<gene>
    <name evidence="1" type="primary">dxs</name>
    <name type="ordered locus">ECA1131</name>
</gene>
<feature type="chain" id="PRO_0000256417" description="1-deoxy-D-xylulose-5-phosphate synthase">
    <location>
        <begin position="1"/>
        <end position="621"/>
    </location>
</feature>
<feature type="binding site" evidence="1">
    <location>
        <position position="80"/>
    </location>
    <ligand>
        <name>thiamine diphosphate</name>
        <dbReference type="ChEBI" id="CHEBI:58937"/>
    </ligand>
</feature>
<feature type="binding site" evidence="1">
    <location>
        <begin position="121"/>
        <end position="123"/>
    </location>
    <ligand>
        <name>thiamine diphosphate</name>
        <dbReference type="ChEBI" id="CHEBI:58937"/>
    </ligand>
</feature>
<feature type="binding site" evidence="1">
    <location>
        <position position="152"/>
    </location>
    <ligand>
        <name>Mg(2+)</name>
        <dbReference type="ChEBI" id="CHEBI:18420"/>
    </ligand>
</feature>
<feature type="binding site" evidence="1">
    <location>
        <begin position="153"/>
        <end position="154"/>
    </location>
    <ligand>
        <name>thiamine diphosphate</name>
        <dbReference type="ChEBI" id="CHEBI:58937"/>
    </ligand>
</feature>
<feature type="binding site" evidence="1">
    <location>
        <position position="181"/>
    </location>
    <ligand>
        <name>Mg(2+)</name>
        <dbReference type="ChEBI" id="CHEBI:18420"/>
    </ligand>
</feature>
<feature type="binding site" evidence="1">
    <location>
        <position position="181"/>
    </location>
    <ligand>
        <name>thiamine diphosphate</name>
        <dbReference type="ChEBI" id="CHEBI:58937"/>
    </ligand>
</feature>
<feature type="binding site" evidence="1">
    <location>
        <position position="288"/>
    </location>
    <ligand>
        <name>thiamine diphosphate</name>
        <dbReference type="ChEBI" id="CHEBI:58937"/>
    </ligand>
</feature>
<feature type="binding site" evidence="1">
    <location>
        <position position="371"/>
    </location>
    <ligand>
        <name>thiamine diphosphate</name>
        <dbReference type="ChEBI" id="CHEBI:58937"/>
    </ligand>
</feature>
<proteinExistence type="inferred from homology"/>
<protein>
    <recommendedName>
        <fullName evidence="1">1-deoxy-D-xylulose-5-phosphate synthase</fullName>
        <ecNumber evidence="1">2.2.1.7</ecNumber>
    </recommendedName>
    <alternativeName>
        <fullName evidence="1">1-deoxyxylulose-5-phosphate synthase</fullName>
        <shortName evidence="1">DXP synthase</shortName>
        <shortName evidence="1">DXPS</shortName>
    </alternativeName>
</protein>
<reference key="1">
    <citation type="journal article" date="2004" name="Proc. Natl. Acad. Sci. U.S.A.">
        <title>Genome sequence of the enterobacterial phytopathogen Erwinia carotovora subsp. atroseptica and characterization of virulence factors.</title>
        <authorList>
            <person name="Bell K.S."/>
            <person name="Sebaihia M."/>
            <person name="Pritchard L."/>
            <person name="Holden M.T.G."/>
            <person name="Hyman L.J."/>
            <person name="Holeva M.C."/>
            <person name="Thomson N.R."/>
            <person name="Bentley S.D."/>
            <person name="Churcher L.J.C."/>
            <person name="Mungall K."/>
            <person name="Atkin R."/>
            <person name="Bason N."/>
            <person name="Brooks K."/>
            <person name="Chillingworth T."/>
            <person name="Clark K."/>
            <person name="Doggett J."/>
            <person name="Fraser A."/>
            <person name="Hance Z."/>
            <person name="Hauser H."/>
            <person name="Jagels K."/>
            <person name="Moule S."/>
            <person name="Norbertczak H."/>
            <person name="Ormond D."/>
            <person name="Price C."/>
            <person name="Quail M.A."/>
            <person name="Sanders M."/>
            <person name="Walker D."/>
            <person name="Whitehead S."/>
            <person name="Salmond G.P.C."/>
            <person name="Birch P.R.J."/>
            <person name="Parkhill J."/>
            <person name="Toth I.K."/>
        </authorList>
    </citation>
    <scope>NUCLEOTIDE SEQUENCE [LARGE SCALE GENOMIC DNA]</scope>
    <source>
        <strain>SCRI 1043 / ATCC BAA-672</strain>
    </source>
</reference>
<organism>
    <name type="scientific">Pectobacterium atrosepticum (strain SCRI 1043 / ATCC BAA-672)</name>
    <name type="common">Erwinia carotovora subsp. atroseptica</name>
    <dbReference type="NCBI Taxonomy" id="218491"/>
    <lineage>
        <taxon>Bacteria</taxon>
        <taxon>Pseudomonadati</taxon>
        <taxon>Pseudomonadota</taxon>
        <taxon>Gammaproteobacteria</taxon>
        <taxon>Enterobacterales</taxon>
        <taxon>Pectobacteriaceae</taxon>
        <taxon>Pectobacterium</taxon>
    </lineage>
</organism>